<evidence type="ECO:0000255" key="1">
    <source>
        <dbReference type="HAMAP-Rule" id="MF_01714"/>
    </source>
</evidence>
<organism>
    <name type="scientific">Roseobacter denitrificans (strain ATCC 33942 / OCh 114)</name>
    <name type="common">Erythrobacter sp. (strain OCh 114)</name>
    <name type="synonym">Roseobacter denitrificans</name>
    <dbReference type="NCBI Taxonomy" id="375451"/>
    <lineage>
        <taxon>Bacteria</taxon>
        <taxon>Pseudomonadati</taxon>
        <taxon>Pseudomonadota</taxon>
        <taxon>Alphaproteobacteria</taxon>
        <taxon>Rhodobacterales</taxon>
        <taxon>Roseobacteraceae</taxon>
        <taxon>Roseobacter</taxon>
    </lineage>
</organism>
<name>TAUB_ROSDO</name>
<keyword id="KW-0067">ATP-binding</keyword>
<keyword id="KW-0997">Cell inner membrane</keyword>
<keyword id="KW-1003">Cell membrane</keyword>
<keyword id="KW-0472">Membrane</keyword>
<keyword id="KW-0547">Nucleotide-binding</keyword>
<keyword id="KW-1185">Reference proteome</keyword>
<keyword id="KW-1278">Translocase</keyword>
<keyword id="KW-0813">Transport</keyword>
<protein>
    <recommendedName>
        <fullName evidence="1">Taurine import ATP-binding protein TauB</fullName>
        <ecNumber evidence="1">7.6.2.7</ecNumber>
    </recommendedName>
</protein>
<sequence>MTGLSINNLSMRFELPNGDHVQALQDVSLDLKAGELLSVLGPSGCGKTTLLNIVAGFLAPTSGELILNGHRITGPDAERGMVFQQGALFEWMSVRENVAFGPSMKGTPKVDKDKTVDHLLDVVGLQDFKEKAVYELSGGMQQRVALARCLANDPDVILMDEPLGALDALTREKMQSLVLKLWKETGKTIILITHSVEEALLLGERLIVMAPRPGRIHKEYRLPFADLGVDSDLREVKKHPEFGPRREEILNMIWDMEEEIMGGKEDAA</sequence>
<proteinExistence type="inferred from homology"/>
<gene>
    <name evidence="1" type="primary">tauB</name>
    <name type="ordered locus">RD1_0983</name>
</gene>
<dbReference type="EC" id="7.6.2.7" evidence="1"/>
<dbReference type="EMBL" id="CP000362">
    <property type="protein sequence ID" value="ABG30650.1"/>
    <property type="molecule type" value="Genomic_DNA"/>
</dbReference>
<dbReference type="RefSeq" id="WP_011567272.1">
    <property type="nucleotide sequence ID" value="NC_008209.1"/>
</dbReference>
<dbReference type="SMR" id="Q16BJ3"/>
<dbReference type="STRING" id="375451.RD1_0983"/>
<dbReference type="KEGG" id="rde:RD1_0983"/>
<dbReference type="eggNOG" id="COG1116">
    <property type="taxonomic scope" value="Bacteria"/>
</dbReference>
<dbReference type="HOGENOM" id="CLU_000604_1_22_5"/>
<dbReference type="OrthoDB" id="9802264at2"/>
<dbReference type="Proteomes" id="UP000007029">
    <property type="component" value="Chromosome"/>
</dbReference>
<dbReference type="GO" id="GO:0005886">
    <property type="term" value="C:plasma membrane"/>
    <property type="evidence" value="ECO:0007669"/>
    <property type="project" value="UniProtKB-SubCell"/>
</dbReference>
<dbReference type="GO" id="GO:0015411">
    <property type="term" value="F:ABC-type taurine transporter transporter activity"/>
    <property type="evidence" value="ECO:0007669"/>
    <property type="project" value="UniProtKB-EC"/>
</dbReference>
<dbReference type="GO" id="GO:0005524">
    <property type="term" value="F:ATP binding"/>
    <property type="evidence" value="ECO:0007669"/>
    <property type="project" value="UniProtKB-KW"/>
</dbReference>
<dbReference type="GO" id="GO:0016887">
    <property type="term" value="F:ATP hydrolysis activity"/>
    <property type="evidence" value="ECO:0007669"/>
    <property type="project" value="InterPro"/>
</dbReference>
<dbReference type="CDD" id="cd03293">
    <property type="entry name" value="ABC_NrtD_SsuB_transporters"/>
    <property type="match status" value="1"/>
</dbReference>
<dbReference type="Gene3D" id="3.40.50.300">
    <property type="entry name" value="P-loop containing nucleotide triphosphate hydrolases"/>
    <property type="match status" value="1"/>
</dbReference>
<dbReference type="InterPro" id="IPR003593">
    <property type="entry name" value="AAA+_ATPase"/>
</dbReference>
<dbReference type="InterPro" id="IPR003439">
    <property type="entry name" value="ABC_transporter-like_ATP-bd"/>
</dbReference>
<dbReference type="InterPro" id="IPR017871">
    <property type="entry name" value="ABC_transporter-like_CS"/>
</dbReference>
<dbReference type="InterPro" id="IPR050166">
    <property type="entry name" value="ABC_transporter_ATP-bind"/>
</dbReference>
<dbReference type="InterPro" id="IPR027417">
    <property type="entry name" value="P-loop_NTPase"/>
</dbReference>
<dbReference type="PANTHER" id="PTHR42788:SF18">
    <property type="entry name" value="TAURINE IMPORT ATP-BINDING PROTEIN TAUB"/>
    <property type="match status" value="1"/>
</dbReference>
<dbReference type="PANTHER" id="PTHR42788">
    <property type="entry name" value="TAURINE IMPORT ATP-BINDING PROTEIN-RELATED"/>
    <property type="match status" value="1"/>
</dbReference>
<dbReference type="Pfam" id="PF00005">
    <property type="entry name" value="ABC_tran"/>
    <property type="match status" value="1"/>
</dbReference>
<dbReference type="SMART" id="SM00382">
    <property type="entry name" value="AAA"/>
    <property type="match status" value="1"/>
</dbReference>
<dbReference type="SUPFAM" id="SSF52540">
    <property type="entry name" value="P-loop containing nucleoside triphosphate hydrolases"/>
    <property type="match status" value="1"/>
</dbReference>
<dbReference type="PROSITE" id="PS00211">
    <property type="entry name" value="ABC_TRANSPORTER_1"/>
    <property type="match status" value="1"/>
</dbReference>
<dbReference type="PROSITE" id="PS50893">
    <property type="entry name" value="ABC_TRANSPORTER_2"/>
    <property type="match status" value="1"/>
</dbReference>
<dbReference type="PROSITE" id="PS51250">
    <property type="entry name" value="TAUB"/>
    <property type="match status" value="1"/>
</dbReference>
<comment type="function">
    <text evidence="1">Part of the ABC transporter complex TauABC involved in taurine import. Responsible for energy coupling to the transport system.</text>
</comment>
<comment type="catalytic activity">
    <reaction evidence="1">
        <text>taurine(out) + ATP + H2O = taurine(in) + ADP + phosphate + H(+)</text>
        <dbReference type="Rhea" id="RHEA:14613"/>
        <dbReference type="ChEBI" id="CHEBI:15377"/>
        <dbReference type="ChEBI" id="CHEBI:15378"/>
        <dbReference type="ChEBI" id="CHEBI:30616"/>
        <dbReference type="ChEBI" id="CHEBI:43474"/>
        <dbReference type="ChEBI" id="CHEBI:456216"/>
        <dbReference type="ChEBI" id="CHEBI:507393"/>
        <dbReference type="EC" id="7.6.2.7"/>
    </reaction>
</comment>
<comment type="subunit">
    <text evidence="1">The complex is composed of two ATP-binding proteins (TauB), two transmembrane proteins (TauC) and a solute-binding protein (TauA).</text>
</comment>
<comment type="subcellular location">
    <subcellularLocation>
        <location evidence="1">Cell inner membrane</location>
        <topology evidence="1">Peripheral membrane protein</topology>
    </subcellularLocation>
</comment>
<comment type="similarity">
    <text evidence="1">Belongs to the ABC transporter superfamily. Taurine importer (TC 3.A.1.17.1) family.</text>
</comment>
<reference key="1">
    <citation type="journal article" date="2007" name="J. Bacteriol.">
        <title>The complete genome sequence of Roseobacter denitrificans reveals a mixotrophic rather than photosynthetic metabolism.</title>
        <authorList>
            <person name="Swingley W.D."/>
            <person name="Sadekar S."/>
            <person name="Mastrian S.D."/>
            <person name="Matthies H.J."/>
            <person name="Hao J."/>
            <person name="Ramos H."/>
            <person name="Acharya C.R."/>
            <person name="Conrad A.L."/>
            <person name="Taylor H.L."/>
            <person name="Dejesa L.C."/>
            <person name="Shah M.K."/>
            <person name="O'Huallachain M.E."/>
            <person name="Lince M.T."/>
            <person name="Blankenship R.E."/>
            <person name="Beatty J.T."/>
            <person name="Touchman J.W."/>
        </authorList>
    </citation>
    <scope>NUCLEOTIDE SEQUENCE [LARGE SCALE GENOMIC DNA]</scope>
    <source>
        <strain>ATCC 33942 / OCh 114</strain>
    </source>
</reference>
<accession>Q16BJ3</accession>
<feature type="chain" id="PRO_0000275842" description="Taurine import ATP-binding protein TauB">
    <location>
        <begin position="1"/>
        <end position="268"/>
    </location>
</feature>
<feature type="domain" description="ABC transporter" evidence="1">
    <location>
        <begin position="4"/>
        <end position="236"/>
    </location>
</feature>
<feature type="binding site" evidence="1">
    <location>
        <begin position="41"/>
        <end position="48"/>
    </location>
    <ligand>
        <name>ATP</name>
        <dbReference type="ChEBI" id="CHEBI:30616"/>
    </ligand>
</feature>